<name>SSAA_STAAE</name>
<accession>Q53587</accession>
<accession>A6QK56</accession>
<gene>
    <name type="primary">ssaA</name>
    <name type="ordered locus">NWMN_2466</name>
</gene>
<keyword id="KW-0677">Repeat</keyword>
<keyword id="KW-0964">Secreted</keyword>
<keyword id="KW-0732">Signal</keyword>
<keyword id="KW-0843">Virulence</keyword>
<sequence>MKKIVTATIATAGLATIAFAGHDAQAAEQNNNGYNSNDAQSYSYTYTIDAQGNYHYTWTGNWNPSQLTQNNTYYYNNYNTYSYNNASYNNYYNHSYQYNNYTNNSQTATNNYYTGGSGASYSTTSNNVHVTTTAAPSSNGRSISNGYASGSNLYTSGQCTYYVFDRVGGKIGSTWGNASNWANAAASSGYTVNNTPKVGAIMQTTQGYYGHVAYVEGVNSNGSVRVSEMNYGHGAGVVTSRTISANQAGSYNFIH</sequence>
<feature type="signal peptide" evidence="2">
    <location>
        <begin position="1"/>
        <end position="26"/>
    </location>
</feature>
<feature type="chain" id="PRO_0000045307" description="Staphylococcal secretory antigen SsaA">
    <location>
        <begin position="27"/>
        <end position="255"/>
    </location>
</feature>
<feature type="repeat" description="1">
    <location>
        <begin position="75"/>
        <end position="78"/>
    </location>
</feature>
<feature type="repeat" description="2">
    <location>
        <begin position="88"/>
        <end position="91"/>
    </location>
</feature>
<feature type="repeat" description="3">
    <location>
        <begin position="98"/>
        <end position="101"/>
    </location>
</feature>
<feature type="domain" description="Peptidase C51" evidence="3">
    <location>
        <begin position="134"/>
        <end position="255"/>
    </location>
</feature>
<feature type="region of interest" description="3 X 4 AA repeats of Y-N-N-Y">
    <location>
        <begin position="75"/>
        <end position="101"/>
    </location>
</feature>
<protein>
    <recommendedName>
        <fullName>Staphylococcal secretory antigen SsaA</fullName>
    </recommendedName>
</protein>
<comment type="function">
    <text evidence="1">Not known; immunogenic protein.</text>
</comment>
<comment type="subcellular location">
    <subcellularLocation>
        <location evidence="1">Secreted</location>
    </subcellularLocation>
</comment>
<comment type="induction">
    <text evidence="1">Activated by two-component regulatory system YycG/YycF.</text>
</comment>
<organism>
    <name type="scientific">Staphylococcus aureus (strain Newman)</name>
    <dbReference type="NCBI Taxonomy" id="426430"/>
    <lineage>
        <taxon>Bacteria</taxon>
        <taxon>Bacillati</taxon>
        <taxon>Bacillota</taxon>
        <taxon>Bacilli</taxon>
        <taxon>Bacillales</taxon>
        <taxon>Staphylococcaceae</taxon>
        <taxon>Staphylococcus</taxon>
    </lineage>
</organism>
<dbReference type="EMBL" id="X97985">
    <property type="protein sequence ID" value="CAA66624.1"/>
    <property type="molecule type" value="Genomic_DNA"/>
</dbReference>
<dbReference type="EMBL" id="AP009351">
    <property type="protein sequence ID" value="BAF68738.1"/>
    <property type="molecule type" value="Genomic_DNA"/>
</dbReference>
<dbReference type="RefSeq" id="WP_000725225.1">
    <property type="nucleotide sequence ID" value="NZ_JBBIAE010000005.1"/>
</dbReference>
<dbReference type="SMR" id="Q53587"/>
<dbReference type="KEGG" id="sae:NWMN_2466"/>
<dbReference type="HOGENOM" id="CLU_016043_11_0_9"/>
<dbReference type="Proteomes" id="UP000006386">
    <property type="component" value="Chromosome"/>
</dbReference>
<dbReference type="GO" id="GO:0005576">
    <property type="term" value="C:extracellular region"/>
    <property type="evidence" value="ECO:0007669"/>
    <property type="project" value="UniProtKB-SubCell"/>
</dbReference>
<dbReference type="Gene3D" id="3.90.1720.10">
    <property type="entry name" value="endopeptidase domain like (from Nostoc punctiforme)"/>
    <property type="match status" value="1"/>
</dbReference>
<dbReference type="InterPro" id="IPR007921">
    <property type="entry name" value="CHAP_dom"/>
</dbReference>
<dbReference type="InterPro" id="IPR038765">
    <property type="entry name" value="Papain-like_cys_pep_sf"/>
</dbReference>
<dbReference type="Pfam" id="PF05257">
    <property type="entry name" value="CHAP"/>
    <property type="match status" value="1"/>
</dbReference>
<dbReference type="SUPFAM" id="SSF54001">
    <property type="entry name" value="Cysteine proteinases"/>
    <property type="match status" value="1"/>
</dbReference>
<dbReference type="PROSITE" id="PS50911">
    <property type="entry name" value="CHAP"/>
    <property type="match status" value="1"/>
</dbReference>
<reference key="1">
    <citation type="journal article" date="2005" name="J. Biol. Chem.">
        <title>Structure and biosynthesis of staphyloxanthin from Staphylococcus aureus.</title>
        <authorList>
            <person name="Pelz A."/>
            <person name="Wieland K.-P."/>
            <person name="Putzbach K."/>
            <person name="Hentschel P."/>
            <person name="Albert K."/>
            <person name="Goetz F."/>
        </authorList>
    </citation>
    <scope>NUCLEOTIDE SEQUENCE [GENOMIC DNA]</scope>
</reference>
<reference key="2">
    <citation type="journal article" date="2008" name="J. Bacteriol.">
        <title>Genome sequence of Staphylococcus aureus strain Newman and comparative analysis of staphylococcal genomes: polymorphism and evolution of two major pathogenicity islands.</title>
        <authorList>
            <person name="Baba T."/>
            <person name="Bae T."/>
            <person name="Schneewind O."/>
            <person name="Takeuchi F."/>
            <person name="Hiramatsu K."/>
        </authorList>
    </citation>
    <scope>NUCLEOTIDE SEQUENCE [LARGE SCALE GENOMIC DNA]</scope>
    <source>
        <strain>Newman</strain>
    </source>
</reference>
<proteinExistence type="inferred from homology"/>
<evidence type="ECO:0000250" key="1"/>
<evidence type="ECO:0000255" key="2"/>
<evidence type="ECO:0000255" key="3">
    <source>
        <dbReference type="PROSITE-ProRule" id="PRU00048"/>
    </source>
</evidence>